<sequence>MIEASKLRAGMTFESEGKLIRVLEASHHKPGKGNTIMRMKLRDVRTGSTFDTTYRPDEKFEQAIIETVPAQYLYKMDDTAYFMNTETYDQYEIPVVNVEQELLYILENSDVKIQFYGSEVIGVTVPTTVELTVTETQPSIKGATVTGSGKPATLETGLVVNVPDFIEAGQKLVINTAEGTYVSRA</sequence>
<gene>
    <name evidence="1" type="primary">efp</name>
    <name type="ordered locus">SUB1548</name>
</gene>
<proteinExistence type="inferred from homology"/>
<keyword id="KW-0963">Cytoplasm</keyword>
<keyword id="KW-0251">Elongation factor</keyword>
<keyword id="KW-0648">Protein biosynthesis</keyword>
<keyword id="KW-1185">Reference proteome</keyword>
<evidence type="ECO:0000255" key="1">
    <source>
        <dbReference type="HAMAP-Rule" id="MF_00141"/>
    </source>
</evidence>
<accession>B9DVJ6</accession>
<protein>
    <recommendedName>
        <fullName evidence="1">Elongation factor P</fullName>
        <shortName evidence="1">EF-P</shortName>
    </recommendedName>
</protein>
<dbReference type="EMBL" id="AM946015">
    <property type="protein sequence ID" value="CAR43318.1"/>
    <property type="molecule type" value="Genomic_DNA"/>
</dbReference>
<dbReference type="RefSeq" id="WP_015911856.1">
    <property type="nucleotide sequence ID" value="NC_012004.1"/>
</dbReference>
<dbReference type="SMR" id="B9DVJ6"/>
<dbReference type="STRING" id="218495.SUB1548"/>
<dbReference type="GeneID" id="93826866"/>
<dbReference type="KEGG" id="sub:SUB1548"/>
<dbReference type="eggNOG" id="COG0231">
    <property type="taxonomic scope" value="Bacteria"/>
</dbReference>
<dbReference type="HOGENOM" id="CLU_074944_3_0_9"/>
<dbReference type="OrthoDB" id="9801844at2"/>
<dbReference type="UniPathway" id="UPA00345"/>
<dbReference type="Proteomes" id="UP000000449">
    <property type="component" value="Chromosome"/>
</dbReference>
<dbReference type="GO" id="GO:0005737">
    <property type="term" value="C:cytoplasm"/>
    <property type="evidence" value="ECO:0007669"/>
    <property type="project" value="UniProtKB-SubCell"/>
</dbReference>
<dbReference type="GO" id="GO:0003746">
    <property type="term" value="F:translation elongation factor activity"/>
    <property type="evidence" value="ECO:0007669"/>
    <property type="project" value="UniProtKB-UniRule"/>
</dbReference>
<dbReference type="GO" id="GO:0043043">
    <property type="term" value="P:peptide biosynthetic process"/>
    <property type="evidence" value="ECO:0007669"/>
    <property type="project" value="InterPro"/>
</dbReference>
<dbReference type="CDD" id="cd04470">
    <property type="entry name" value="S1_EF-P_repeat_1"/>
    <property type="match status" value="1"/>
</dbReference>
<dbReference type="CDD" id="cd05794">
    <property type="entry name" value="S1_EF-P_repeat_2"/>
    <property type="match status" value="1"/>
</dbReference>
<dbReference type="FunFam" id="2.30.30.30:FF:000003">
    <property type="entry name" value="Elongation factor P"/>
    <property type="match status" value="1"/>
</dbReference>
<dbReference type="FunFam" id="2.40.50.140:FF:000004">
    <property type="entry name" value="Elongation factor P"/>
    <property type="match status" value="1"/>
</dbReference>
<dbReference type="FunFam" id="2.40.50.140:FF:000009">
    <property type="entry name" value="Elongation factor P"/>
    <property type="match status" value="1"/>
</dbReference>
<dbReference type="Gene3D" id="2.30.30.30">
    <property type="match status" value="1"/>
</dbReference>
<dbReference type="Gene3D" id="2.40.50.140">
    <property type="entry name" value="Nucleic acid-binding proteins"/>
    <property type="match status" value="2"/>
</dbReference>
<dbReference type="HAMAP" id="MF_00141">
    <property type="entry name" value="EF_P"/>
    <property type="match status" value="1"/>
</dbReference>
<dbReference type="InterPro" id="IPR015365">
    <property type="entry name" value="Elong-fact-P_C"/>
</dbReference>
<dbReference type="InterPro" id="IPR012340">
    <property type="entry name" value="NA-bd_OB-fold"/>
</dbReference>
<dbReference type="InterPro" id="IPR014722">
    <property type="entry name" value="Rib_uL2_dom2"/>
</dbReference>
<dbReference type="InterPro" id="IPR020599">
    <property type="entry name" value="Transl_elong_fac_P/YeiP"/>
</dbReference>
<dbReference type="InterPro" id="IPR013185">
    <property type="entry name" value="Transl_elong_KOW-like"/>
</dbReference>
<dbReference type="InterPro" id="IPR001059">
    <property type="entry name" value="Transl_elong_P/YeiP_cen"/>
</dbReference>
<dbReference type="InterPro" id="IPR013852">
    <property type="entry name" value="Transl_elong_P/YeiP_CS"/>
</dbReference>
<dbReference type="InterPro" id="IPR011768">
    <property type="entry name" value="Transl_elongation_fac_P"/>
</dbReference>
<dbReference type="InterPro" id="IPR008991">
    <property type="entry name" value="Translation_prot_SH3-like_sf"/>
</dbReference>
<dbReference type="NCBIfam" id="TIGR00038">
    <property type="entry name" value="efp"/>
    <property type="match status" value="1"/>
</dbReference>
<dbReference type="NCBIfam" id="NF001810">
    <property type="entry name" value="PRK00529.1"/>
    <property type="match status" value="1"/>
</dbReference>
<dbReference type="PANTHER" id="PTHR30053">
    <property type="entry name" value="ELONGATION FACTOR P"/>
    <property type="match status" value="1"/>
</dbReference>
<dbReference type="PANTHER" id="PTHR30053:SF12">
    <property type="entry name" value="ELONGATION FACTOR P (EF-P) FAMILY PROTEIN"/>
    <property type="match status" value="1"/>
</dbReference>
<dbReference type="Pfam" id="PF01132">
    <property type="entry name" value="EFP"/>
    <property type="match status" value="1"/>
</dbReference>
<dbReference type="Pfam" id="PF08207">
    <property type="entry name" value="EFP_N"/>
    <property type="match status" value="1"/>
</dbReference>
<dbReference type="Pfam" id="PF09285">
    <property type="entry name" value="Elong-fact-P_C"/>
    <property type="match status" value="1"/>
</dbReference>
<dbReference type="PIRSF" id="PIRSF005901">
    <property type="entry name" value="EF-P"/>
    <property type="match status" value="1"/>
</dbReference>
<dbReference type="SMART" id="SM01185">
    <property type="entry name" value="EFP"/>
    <property type="match status" value="1"/>
</dbReference>
<dbReference type="SMART" id="SM00841">
    <property type="entry name" value="Elong-fact-P_C"/>
    <property type="match status" value="1"/>
</dbReference>
<dbReference type="SUPFAM" id="SSF50249">
    <property type="entry name" value="Nucleic acid-binding proteins"/>
    <property type="match status" value="2"/>
</dbReference>
<dbReference type="SUPFAM" id="SSF50104">
    <property type="entry name" value="Translation proteins SH3-like domain"/>
    <property type="match status" value="1"/>
</dbReference>
<dbReference type="PROSITE" id="PS01275">
    <property type="entry name" value="EFP"/>
    <property type="match status" value="1"/>
</dbReference>
<feature type="chain" id="PRO_1000123031" description="Elongation factor P">
    <location>
        <begin position="1"/>
        <end position="185"/>
    </location>
</feature>
<organism>
    <name type="scientific">Streptococcus uberis (strain ATCC BAA-854 / 0140J)</name>
    <dbReference type="NCBI Taxonomy" id="218495"/>
    <lineage>
        <taxon>Bacteria</taxon>
        <taxon>Bacillati</taxon>
        <taxon>Bacillota</taxon>
        <taxon>Bacilli</taxon>
        <taxon>Lactobacillales</taxon>
        <taxon>Streptococcaceae</taxon>
        <taxon>Streptococcus</taxon>
    </lineage>
</organism>
<name>EFP_STRU0</name>
<reference key="1">
    <citation type="journal article" date="2009" name="BMC Genomics">
        <title>Evidence for niche adaptation in the genome of the bovine pathogen Streptococcus uberis.</title>
        <authorList>
            <person name="Ward P.N."/>
            <person name="Holden M.T.G."/>
            <person name="Leigh J.A."/>
            <person name="Lennard N."/>
            <person name="Bignell A."/>
            <person name="Barron A."/>
            <person name="Clark L."/>
            <person name="Quail M.A."/>
            <person name="Woodward J."/>
            <person name="Barrell B.G."/>
            <person name="Egan S.A."/>
            <person name="Field T.R."/>
            <person name="Maskell D."/>
            <person name="Kehoe M."/>
            <person name="Dowson C.G."/>
            <person name="Chanter N."/>
            <person name="Whatmore A.M."/>
            <person name="Bentley S.D."/>
            <person name="Parkhill J."/>
        </authorList>
    </citation>
    <scope>NUCLEOTIDE SEQUENCE [LARGE SCALE GENOMIC DNA]</scope>
    <source>
        <strain>ATCC BAA-854 / 0140J</strain>
    </source>
</reference>
<comment type="function">
    <text evidence="1">Involved in peptide bond synthesis. Stimulates efficient translation and peptide-bond synthesis on native or reconstituted 70S ribosomes in vitro. Probably functions indirectly by altering the affinity of the ribosome for aminoacyl-tRNA, thus increasing their reactivity as acceptors for peptidyl transferase.</text>
</comment>
<comment type="pathway">
    <text evidence="1">Protein biosynthesis; polypeptide chain elongation.</text>
</comment>
<comment type="subcellular location">
    <subcellularLocation>
        <location evidence="1">Cytoplasm</location>
    </subcellularLocation>
</comment>
<comment type="similarity">
    <text evidence="1">Belongs to the elongation factor P family.</text>
</comment>